<sequence length="153" mass="17809">MSVTDLVLVVFIALLLIYAIYDEFIMNMMKGKTRLQVHLKRKNKLDCMIFVGLIGILIYNNVMAHGAPLTTYLLVGLALVAVYISYIRWPKLLFKNTGFFYANTFIEYSRIKSMNLSEDGILVIDLEQRRLLIQVKKLDDLEKIYNFFIENQS</sequence>
<accession>A9R5Y6</accession>
<keyword id="KW-0997">Cell inner membrane</keyword>
<keyword id="KW-1003">Cell membrane</keyword>
<keyword id="KW-0472">Membrane</keyword>
<keyword id="KW-0812">Transmembrane</keyword>
<keyword id="KW-1133">Transmembrane helix</keyword>
<dbReference type="EMBL" id="CP000901">
    <property type="protein sequence ID" value="ABX88316.1"/>
    <property type="molecule type" value="Genomic_DNA"/>
</dbReference>
<dbReference type="RefSeq" id="WP_002211066.1">
    <property type="nucleotide sequence ID" value="NZ_CP009935.1"/>
</dbReference>
<dbReference type="KEGG" id="ypg:YpAngola_A1654"/>
<dbReference type="PATRIC" id="fig|349746.12.peg.2624"/>
<dbReference type="GO" id="GO:0005886">
    <property type="term" value="C:plasma membrane"/>
    <property type="evidence" value="ECO:0007669"/>
    <property type="project" value="UniProtKB-SubCell"/>
</dbReference>
<dbReference type="HAMAP" id="MF_01071">
    <property type="entry name" value="UPF0266"/>
    <property type="match status" value="1"/>
</dbReference>
<dbReference type="InterPro" id="IPR009328">
    <property type="entry name" value="DUF986"/>
</dbReference>
<dbReference type="NCBIfam" id="NF002791">
    <property type="entry name" value="PRK02913.1"/>
    <property type="match status" value="1"/>
</dbReference>
<dbReference type="Pfam" id="PF06173">
    <property type="entry name" value="DUF986"/>
    <property type="match status" value="1"/>
</dbReference>
<dbReference type="PIRSF" id="PIRSF020687">
    <property type="entry name" value="UCP020687"/>
    <property type="match status" value="1"/>
</dbReference>
<protein>
    <recommendedName>
        <fullName evidence="1">UPF0266 membrane protein YpAngola_A1654</fullName>
    </recommendedName>
</protein>
<feature type="chain" id="PRO_1000136654" description="UPF0266 membrane protein YpAngola_A1654">
    <location>
        <begin position="1"/>
        <end position="153"/>
    </location>
</feature>
<feature type="transmembrane region" description="Helical" evidence="1">
    <location>
        <begin position="6"/>
        <end position="26"/>
    </location>
</feature>
<feature type="transmembrane region" description="Helical" evidence="1">
    <location>
        <begin position="45"/>
        <end position="65"/>
    </location>
</feature>
<feature type="transmembrane region" description="Helical" evidence="1">
    <location>
        <begin position="67"/>
        <end position="87"/>
    </location>
</feature>
<evidence type="ECO:0000255" key="1">
    <source>
        <dbReference type="HAMAP-Rule" id="MF_01071"/>
    </source>
</evidence>
<comment type="subcellular location">
    <subcellularLocation>
        <location evidence="1">Cell inner membrane</location>
        <topology evidence="1">Multi-pass membrane protein</topology>
    </subcellularLocation>
</comment>
<comment type="similarity">
    <text evidence="1">Belongs to the UPF0266 family.</text>
</comment>
<name>Y1654_YERPG</name>
<organism>
    <name type="scientific">Yersinia pestis bv. Antiqua (strain Angola)</name>
    <dbReference type="NCBI Taxonomy" id="349746"/>
    <lineage>
        <taxon>Bacteria</taxon>
        <taxon>Pseudomonadati</taxon>
        <taxon>Pseudomonadota</taxon>
        <taxon>Gammaproteobacteria</taxon>
        <taxon>Enterobacterales</taxon>
        <taxon>Yersiniaceae</taxon>
        <taxon>Yersinia</taxon>
    </lineage>
</organism>
<gene>
    <name type="ordered locus">YpAngola_A1654</name>
</gene>
<reference key="1">
    <citation type="journal article" date="2010" name="J. Bacteriol.">
        <title>Genome sequence of the deep-rooted Yersinia pestis strain Angola reveals new insights into the evolution and pangenome of the plague bacterium.</title>
        <authorList>
            <person name="Eppinger M."/>
            <person name="Worsham P.L."/>
            <person name="Nikolich M.P."/>
            <person name="Riley D.R."/>
            <person name="Sebastian Y."/>
            <person name="Mou S."/>
            <person name="Achtman M."/>
            <person name="Lindler L.E."/>
            <person name="Ravel J."/>
        </authorList>
    </citation>
    <scope>NUCLEOTIDE SEQUENCE [LARGE SCALE GENOMIC DNA]</scope>
    <source>
        <strain>Angola</strain>
    </source>
</reference>
<proteinExistence type="inferred from homology"/>